<proteinExistence type="inferred from homology"/>
<evidence type="ECO:0000255" key="1">
    <source>
        <dbReference type="HAMAP-Rule" id="MF_00303"/>
    </source>
</evidence>
<gene>
    <name evidence="1" type="primary">tig</name>
    <name type="ordered locus">PputW619_1741</name>
</gene>
<protein>
    <recommendedName>
        <fullName evidence="1">Trigger factor</fullName>
        <shortName evidence="1">TF</shortName>
        <ecNumber evidence="1">5.2.1.8</ecNumber>
    </recommendedName>
    <alternativeName>
        <fullName evidence="1">PPIase</fullName>
    </alternativeName>
</protein>
<reference key="1">
    <citation type="submission" date="2008-02" db="EMBL/GenBank/DDBJ databases">
        <title>Complete sequence of Pseudomonas putida W619.</title>
        <authorList>
            <person name="Copeland A."/>
            <person name="Lucas S."/>
            <person name="Lapidus A."/>
            <person name="Barry K."/>
            <person name="Detter J.C."/>
            <person name="Glavina del Rio T."/>
            <person name="Dalin E."/>
            <person name="Tice H."/>
            <person name="Pitluck S."/>
            <person name="Chain P."/>
            <person name="Malfatti S."/>
            <person name="Shin M."/>
            <person name="Vergez L."/>
            <person name="Schmutz J."/>
            <person name="Larimer F."/>
            <person name="Land M."/>
            <person name="Hauser L."/>
            <person name="Kyrpides N."/>
            <person name="Kim E."/>
            <person name="Taghavi S."/>
            <person name="Vangronsveld D."/>
            <person name="van der Lelie D."/>
            <person name="Richardson P."/>
        </authorList>
    </citation>
    <scope>NUCLEOTIDE SEQUENCE [LARGE SCALE GENOMIC DNA]</scope>
    <source>
        <strain>W619</strain>
    </source>
</reference>
<accession>B1J691</accession>
<organism>
    <name type="scientific">Pseudomonas putida (strain W619)</name>
    <dbReference type="NCBI Taxonomy" id="390235"/>
    <lineage>
        <taxon>Bacteria</taxon>
        <taxon>Pseudomonadati</taxon>
        <taxon>Pseudomonadota</taxon>
        <taxon>Gammaproteobacteria</taxon>
        <taxon>Pseudomonadales</taxon>
        <taxon>Pseudomonadaceae</taxon>
        <taxon>Pseudomonas</taxon>
    </lineage>
</organism>
<comment type="function">
    <text evidence="1">Involved in protein export. Acts as a chaperone by maintaining the newly synthesized protein in an open conformation. Functions as a peptidyl-prolyl cis-trans isomerase.</text>
</comment>
<comment type="catalytic activity">
    <reaction evidence="1">
        <text>[protein]-peptidylproline (omega=180) = [protein]-peptidylproline (omega=0)</text>
        <dbReference type="Rhea" id="RHEA:16237"/>
        <dbReference type="Rhea" id="RHEA-COMP:10747"/>
        <dbReference type="Rhea" id="RHEA-COMP:10748"/>
        <dbReference type="ChEBI" id="CHEBI:83833"/>
        <dbReference type="ChEBI" id="CHEBI:83834"/>
        <dbReference type="EC" id="5.2.1.8"/>
    </reaction>
</comment>
<comment type="subcellular location">
    <subcellularLocation>
        <location>Cytoplasm</location>
    </subcellularLocation>
    <text evidence="1">About half TF is bound to the ribosome near the polypeptide exit tunnel while the other half is free in the cytoplasm.</text>
</comment>
<comment type="domain">
    <text evidence="1">Consists of 3 domains; the N-terminus binds the ribosome, the middle domain has PPIase activity, while the C-terminus has intrinsic chaperone activity on its own.</text>
</comment>
<comment type="similarity">
    <text evidence="1">Belongs to the FKBP-type PPIase family. Tig subfamily.</text>
</comment>
<sequence length="437" mass="48486">MQVSVENTSALERRMTIAVPAERVENEVNKRLQQTAKRAKVAGFRPGKVPMSVIRQRFEADARQEAFGDLVQASFYEAIVEQKLNPAGAPAVEPKSFEKGKDLEFVAIFEVFPEFAVAGLESISVERLSAEVTDADLDNMLEVLRKQNVRFEAVERAAEKDDQVNIDFVGKIDGEAFAGGSAKGTQLVLGSGRMIPGFEDGLVGAKAGEERVVNVTFPEDYQNLDLAGKAAEFTITVNSVSAPQLPELNEEFFAQFGIKESTLEGFRAEVRKNMERELRQAIKTKVKNQVMDGLLAANPIEVPKALLENEVNRLRVQAVQQFGGNIKPEQLPAELFEEQAKRRVVLGLIVAEVVKQFELKPDEGKVREMIEEMASAYQEPEQVIAWYLKNDQQMNEVRSVVLEEQVVDTVLQKATVTDKSVSYEEAVKPAQAPAEAE</sequence>
<name>TIG_PSEPW</name>
<feature type="chain" id="PRO_1000115568" description="Trigger factor">
    <location>
        <begin position="1"/>
        <end position="437"/>
    </location>
</feature>
<feature type="domain" description="PPIase FKBP-type" evidence="1">
    <location>
        <begin position="161"/>
        <end position="246"/>
    </location>
</feature>
<dbReference type="EC" id="5.2.1.8" evidence="1"/>
<dbReference type="EMBL" id="CP000949">
    <property type="protein sequence ID" value="ACA72245.1"/>
    <property type="molecule type" value="Genomic_DNA"/>
</dbReference>
<dbReference type="SMR" id="B1J691"/>
<dbReference type="STRING" id="390235.PputW619_1741"/>
<dbReference type="KEGG" id="ppw:PputW619_1741"/>
<dbReference type="eggNOG" id="COG0544">
    <property type="taxonomic scope" value="Bacteria"/>
</dbReference>
<dbReference type="HOGENOM" id="CLU_033058_2_0_6"/>
<dbReference type="OrthoDB" id="9767721at2"/>
<dbReference type="GO" id="GO:0005737">
    <property type="term" value="C:cytoplasm"/>
    <property type="evidence" value="ECO:0007669"/>
    <property type="project" value="UniProtKB-SubCell"/>
</dbReference>
<dbReference type="GO" id="GO:0003755">
    <property type="term" value="F:peptidyl-prolyl cis-trans isomerase activity"/>
    <property type="evidence" value="ECO:0007669"/>
    <property type="project" value="UniProtKB-UniRule"/>
</dbReference>
<dbReference type="GO" id="GO:0044183">
    <property type="term" value="F:protein folding chaperone"/>
    <property type="evidence" value="ECO:0007669"/>
    <property type="project" value="TreeGrafter"/>
</dbReference>
<dbReference type="GO" id="GO:0043022">
    <property type="term" value="F:ribosome binding"/>
    <property type="evidence" value="ECO:0007669"/>
    <property type="project" value="TreeGrafter"/>
</dbReference>
<dbReference type="GO" id="GO:0051083">
    <property type="term" value="P:'de novo' cotranslational protein folding"/>
    <property type="evidence" value="ECO:0007669"/>
    <property type="project" value="TreeGrafter"/>
</dbReference>
<dbReference type="GO" id="GO:0051301">
    <property type="term" value="P:cell division"/>
    <property type="evidence" value="ECO:0007669"/>
    <property type="project" value="UniProtKB-KW"/>
</dbReference>
<dbReference type="GO" id="GO:0061077">
    <property type="term" value="P:chaperone-mediated protein folding"/>
    <property type="evidence" value="ECO:0007669"/>
    <property type="project" value="TreeGrafter"/>
</dbReference>
<dbReference type="GO" id="GO:0015031">
    <property type="term" value="P:protein transport"/>
    <property type="evidence" value="ECO:0007669"/>
    <property type="project" value="UniProtKB-UniRule"/>
</dbReference>
<dbReference type="GO" id="GO:0043335">
    <property type="term" value="P:protein unfolding"/>
    <property type="evidence" value="ECO:0007669"/>
    <property type="project" value="TreeGrafter"/>
</dbReference>
<dbReference type="FunFam" id="3.10.50.40:FF:000001">
    <property type="entry name" value="Trigger factor"/>
    <property type="match status" value="1"/>
</dbReference>
<dbReference type="Gene3D" id="3.10.50.40">
    <property type="match status" value="1"/>
</dbReference>
<dbReference type="Gene3D" id="3.30.70.1050">
    <property type="entry name" value="Trigger factor ribosome-binding domain"/>
    <property type="match status" value="1"/>
</dbReference>
<dbReference type="Gene3D" id="1.10.3120.10">
    <property type="entry name" value="Trigger factor, C-terminal domain"/>
    <property type="match status" value="1"/>
</dbReference>
<dbReference type="HAMAP" id="MF_00303">
    <property type="entry name" value="Trigger_factor_Tig"/>
    <property type="match status" value="1"/>
</dbReference>
<dbReference type="InterPro" id="IPR046357">
    <property type="entry name" value="PPIase_dom_sf"/>
</dbReference>
<dbReference type="InterPro" id="IPR001179">
    <property type="entry name" value="PPIase_FKBP_dom"/>
</dbReference>
<dbReference type="InterPro" id="IPR005215">
    <property type="entry name" value="Trig_fac"/>
</dbReference>
<dbReference type="InterPro" id="IPR008880">
    <property type="entry name" value="Trigger_fac_C"/>
</dbReference>
<dbReference type="InterPro" id="IPR037041">
    <property type="entry name" value="Trigger_fac_C_sf"/>
</dbReference>
<dbReference type="InterPro" id="IPR008881">
    <property type="entry name" value="Trigger_fac_ribosome-bd_bac"/>
</dbReference>
<dbReference type="InterPro" id="IPR036611">
    <property type="entry name" value="Trigger_fac_ribosome-bd_sf"/>
</dbReference>
<dbReference type="InterPro" id="IPR027304">
    <property type="entry name" value="Trigger_fact/SurA_dom_sf"/>
</dbReference>
<dbReference type="NCBIfam" id="TIGR00115">
    <property type="entry name" value="tig"/>
    <property type="match status" value="1"/>
</dbReference>
<dbReference type="PANTHER" id="PTHR30560">
    <property type="entry name" value="TRIGGER FACTOR CHAPERONE AND PEPTIDYL-PROLYL CIS/TRANS ISOMERASE"/>
    <property type="match status" value="1"/>
</dbReference>
<dbReference type="PANTHER" id="PTHR30560:SF3">
    <property type="entry name" value="TRIGGER FACTOR-LIKE PROTEIN TIG, CHLOROPLASTIC"/>
    <property type="match status" value="1"/>
</dbReference>
<dbReference type="Pfam" id="PF00254">
    <property type="entry name" value="FKBP_C"/>
    <property type="match status" value="1"/>
</dbReference>
<dbReference type="Pfam" id="PF05698">
    <property type="entry name" value="Trigger_C"/>
    <property type="match status" value="1"/>
</dbReference>
<dbReference type="Pfam" id="PF05697">
    <property type="entry name" value="Trigger_N"/>
    <property type="match status" value="1"/>
</dbReference>
<dbReference type="PIRSF" id="PIRSF003095">
    <property type="entry name" value="Trigger_factor"/>
    <property type="match status" value="1"/>
</dbReference>
<dbReference type="SUPFAM" id="SSF54534">
    <property type="entry name" value="FKBP-like"/>
    <property type="match status" value="1"/>
</dbReference>
<dbReference type="SUPFAM" id="SSF109998">
    <property type="entry name" value="Triger factor/SurA peptide-binding domain-like"/>
    <property type="match status" value="1"/>
</dbReference>
<dbReference type="SUPFAM" id="SSF102735">
    <property type="entry name" value="Trigger factor ribosome-binding domain"/>
    <property type="match status" value="1"/>
</dbReference>
<dbReference type="PROSITE" id="PS50059">
    <property type="entry name" value="FKBP_PPIASE"/>
    <property type="match status" value="1"/>
</dbReference>
<keyword id="KW-0131">Cell cycle</keyword>
<keyword id="KW-0132">Cell division</keyword>
<keyword id="KW-0143">Chaperone</keyword>
<keyword id="KW-0963">Cytoplasm</keyword>
<keyword id="KW-0413">Isomerase</keyword>
<keyword id="KW-0697">Rotamase</keyword>